<sequence>MAPLIPGELLPEPGELELNAGRPVTTLSVANSGDRPVQVGSHFHFAEANAALQFDRTAARGQRLDIPAGTAIRFEPGDSRDVNLIPFAGNRRVIGFNGQINGPLDA</sequence>
<reference key="1">
    <citation type="journal article" date="2003" name="Nature">
        <title>The genome of a motile marine Synechococcus.</title>
        <authorList>
            <person name="Palenik B."/>
            <person name="Brahamsha B."/>
            <person name="Larimer F.W."/>
            <person name="Land M.L."/>
            <person name="Hauser L."/>
            <person name="Chain P."/>
            <person name="Lamerdin J.E."/>
            <person name="Regala W."/>
            <person name="Allen E.E."/>
            <person name="McCarren J."/>
            <person name="Paulsen I.T."/>
            <person name="Dufresne A."/>
            <person name="Partensky F."/>
            <person name="Webb E.A."/>
            <person name="Waterbury J."/>
        </authorList>
    </citation>
    <scope>NUCLEOTIDE SEQUENCE [LARGE SCALE GENOMIC DNA]</scope>
    <source>
        <strain>WH8102</strain>
    </source>
</reference>
<accession>Q7U3I4</accession>
<keyword id="KW-0963">Cytoplasm</keyword>
<keyword id="KW-0378">Hydrolase</keyword>
<proteinExistence type="inferred from homology"/>
<feature type="chain" id="PRO_0000234281" description="Urease subunit beta">
    <location>
        <begin position="1"/>
        <end position="106"/>
    </location>
</feature>
<organism>
    <name type="scientific">Parasynechococcus marenigrum (strain WH8102)</name>
    <dbReference type="NCBI Taxonomy" id="84588"/>
    <lineage>
        <taxon>Bacteria</taxon>
        <taxon>Bacillati</taxon>
        <taxon>Cyanobacteriota</taxon>
        <taxon>Cyanophyceae</taxon>
        <taxon>Synechococcales</taxon>
        <taxon>Prochlorococcaceae</taxon>
        <taxon>Parasynechococcus</taxon>
        <taxon>Parasynechococcus marenigrum</taxon>
    </lineage>
</organism>
<dbReference type="EC" id="3.5.1.5" evidence="1"/>
<dbReference type="EMBL" id="BX569695">
    <property type="protein sequence ID" value="CAE08963.1"/>
    <property type="molecule type" value="Genomic_DNA"/>
</dbReference>
<dbReference type="RefSeq" id="WP_011129301.1">
    <property type="nucleotide sequence ID" value="NC_005070.1"/>
</dbReference>
<dbReference type="SMR" id="Q7U3I4"/>
<dbReference type="STRING" id="84588.SYNW2448"/>
<dbReference type="KEGG" id="syw:SYNW2448"/>
<dbReference type="eggNOG" id="COG0832">
    <property type="taxonomic scope" value="Bacteria"/>
</dbReference>
<dbReference type="HOGENOM" id="CLU_129707_1_1_3"/>
<dbReference type="UniPathway" id="UPA00258">
    <property type="reaction ID" value="UER00370"/>
</dbReference>
<dbReference type="Proteomes" id="UP000001422">
    <property type="component" value="Chromosome"/>
</dbReference>
<dbReference type="GO" id="GO:0035550">
    <property type="term" value="C:urease complex"/>
    <property type="evidence" value="ECO:0007669"/>
    <property type="project" value="InterPro"/>
</dbReference>
<dbReference type="GO" id="GO:0009039">
    <property type="term" value="F:urease activity"/>
    <property type="evidence" value="ECO:0007669"/>
    <property type="project" value="UniProtKB-UniRule"/>
</dbReference>
<dbReference type="GO" id="GO:0043419">
    <property type="term" value="P:urea catabolic process"/>
    <property type="evidence" value="ECO:0007669"/>
    <property type="project" value="UniProtKB-UniRule"/>
</dbReference>
<dbReference type="CDD" id="cd00407">
    <property type="entry name" value="Urease_beta"/>
    <property type="match status" value="1"/>
</dbReference>
<dbReference type="FunFam" id="2.10.150.10:FF:000001">
    <property type="entry name" value="Urease subunit beta"/>
    <property type="match status" value="1"/>
</dbReference>
<dbReference type="Gene3D" id="2.10.150.10">
    <property type="entry name" value="Urease, beta subunit"/>
    <property type="match status" value="1"/>
</dbReference>
<dbReference type="HAMAP" id="MF_01954">
    <property type="entry name" value="Urease_beta"/>
    <property type="match status" value="1"/>
</dbReference>
<dbReference type="InterPro" id="IPR002019">
    <property type="entry name" value="Urease_beta-like"/>
</dbReference>
<dbReference type="InterPro" id="IPR036461">
    <property type="entry name" value="Urease_betasu_sf"/>
</dbReference>
<dbReference type="InterPro" id="IPR050069">
    <property type="entry name" value="Urease_subunit"/>
</dbReference>
<dbReference type="NCBIfam" id="NF009682">
    <property type="entry name" value="PRK13203.1"/>
    <property type="match status" value="1"/>
</dbReference>
<dbReference type="NCBIfam" id="TIGR00192">
    <property type="entry name" value="urease_beta"/>
    <property type="match status" value="1"/>
</dbReference>
<dbReference type="PANTHER" id="PTHR33569">
    <property type="entry name" value="UREASE"/>
    <property type="match status" value="1"/>
</dbReference>
<dbReference type="PANTHER" id="PTHR33569:SF1">
    <property type="entry name" value="UREASE"/>
    <property type="match status" value="1"/>
</dbReference>
<dbReference type="Pfam" id="PF00699">
    <property type="entry name" value="Urease_beta"/>
    <property type="match status" value="1"/>
</dbReference>
<dbReference type="SUPFAM" id="SSF51278">
    <property type="entry name" value="Urease, beta-subunit"/>
    <property type="match status" value="1"/>
</dbReference>
<protein>
    <recommendedName>
        <fullName evidence="1">Urease subunit beta</fullName>
        <ecNumber evidence="1">3.5.1.5</ecNumber>
    </recommendedName>
    <alternativeName>
        <fullName evidence="1">Urea amidohydrolase subunit beta</fullName>
    </alternativeName>
</protein>
<name>URE2_PARMW</name>
<gene>
    <name evidence="1" type="primary">ureB</name>
    <name type="ordered locus">SYNW2448</name>
</gene>
<comment type="catalytic activity">
    <reaction evidence="1">
        <text>urea + 2 H2O + H(+) = hydrogencarbonate + 2 NH4(+)</text>
        <dbReference type="Rhea" id="RHEA:20557"/>
        <dbReference type="ChEBI" id="CHEBI:15377"/>
        <dbReference type="ChEBI" id="CHEBI:15378"/>
        <dbReference type="ChEBI" id="CHEBI:16199"/>
        <dbReference type="ChEBI" id="CHEBI:17544"/>
        <dbReference type="ChEBI" id="CHEBI:28938"/>
        <dbReference type="EC" id="3.5.1.5"/>
    </reaction>
</comment>
<comment type="pathway">
    <text evidence="1">Nitrogen metabolism; urea degradation; CO(2) and NH(3) from urea (urease route): step 1/1.</text>
</comment>
<comment type="subunit">
    <text evidence="1">Heterotrimer of UreA (gamma), UreB (beta) and UreC (alpha) subunits. Three heterotrimers associate to form the active enzyme.</text>
</comment>
<comment type="subcellular location">
    <subcellularLocation>
        <location evidence="1">Cytoplasm</location>
    </subcellularLocation>
</comment>
<comment type="similarity">
    <text evidence="1">Belongs to the urease beta subunit family.</text>
</comment>
<evidence type="ECO:0000255" key="1">
    <source>
        <dbReference type="HAMAP-Rule" id="MF_01954"/>
    </source>
</evidence>